<name>SMRCD_MOUSE</name>
<keyword id="KW-0007">Acetylation</keyword>
<keyword id="KW-0025">Alternative splicing</keyword>
<keyword id="KW-0067">ATP-binding</keyword>
<keyword id="KW-0156">Chromatin regulator</keyword>
<keyword id="KW-0158">Chromosome</keyword>
<keyword id="KW-0227">DNA damage</keyword>
<keyword id="KW-0234">DNA repair</keyword>
<keyword id="KW-0238">DNA-binding</keyword>
<keyword id="KW-0347">Helicase</keyword>
<keyword id="KW-0378">Hydrolase</keyword>
<keyword id="KW-1017">Isopeptide bond</keyword>
<keyword id="KW-0547">Nucleotide-binding</keyword>
<keyword id="KW-0539">Nucleus</keyword>
<keyword id="KW-0597">Phosphoprotein</keyword>
<keyword id="KW-1185">Reference proteome</keyword>
<keyword id="KW-0677">Repeat</keyword>
<keyword id="KW-0832">Ubl conjugation</keyword>
<sequence length="1021" mass="116451">MNLFNLDRFRFEKRSKIEEAPEAAPQPSQARPSSPISLSAEEENAEGEGSRANTPDSDVTEKTEDSSVPEPPDNERKASLSCFQNQRAIQEYIDLSSDTEDVSPNCSSTVQEKKFSKDTVIIVSEPSEDEESHDLPSVTRRNDSSELEDLSELEDLKDAKLQTLKELFPQRSDSDLLKLIESTSTMDGAIAAALLMFGDAGGGPRKRKLSSSSEEDDVNDDQSVKQPRGDRGEESNESAEASSNWEKQESIVLKLQKEFPNFDKQELREVLKEHEWMYTEALESLKVFAEDQDVQCASQSEVTNGKEVARNQNYSKNATKIKMKQKISVKPQNGFNKKRKKNVFNPKKAVEDSEYDSGSDAGSSLDEDYSSCEEVMEDGYKGKILHFLQVSSIAELTLIPKCSQKKAQKITELRPFNNWEALFTKMSKINGLSEDLIWNCKTVIQERDVVIRLMNKCEDISNKLTKQVTMLTGNGGGWNREQPSLLNQSLSLKPYQKVGLNWLALVHKHGLNGILADEMGLGKTIQAIAFLAYLFQEGNKGPHLIVVPASTIDNWLREVNLWCPSLNVLCYYGSQEERKQIRFNIHNKYEDYNVIVTTYNCAISSSDDRSLFRRLKLNYAIFDEGHMLKNMGSIRYQHLMTINARNRLLLTGTPVQNNLLELMSLLNFVMPHMFSSSTSEIRRMFSSKTKPADEQSIYEKERIAHAKQIIKPFILRRVKEEVLKLLPPKKDRIELCAMSEKQEQLYSGLFNRLKKSINNLEKNTEMCNVMMQLRKMANHPLLHRQYYTPEKLKEMSQLMLKEPTHCEANPDLIFEDMEVMTDFELHVLCKQYQHINSYQLDMDLILDSGKFRALGCILSELKQKGDRVVLFSQFTMMLDILEVLLKHHQHRYLRLDGKTQISERIHLIDEFNTDMDIFVFLLSTKAGGLGINLTSANVVILHDIDCNPYNDKQAEDRCHRVGQTKEVLVIKLISQGTIEESMLKINQQKLKLEQDMTTVDEADEGSMPADIATLLKTSMGL</sequence>
<evidence type="ECO:0000250" key="1">
    <source>
        <dbReference type="UniProtKB" id="Q9H4L7"/>
    </source>
</evidence>
<evidence type="ECO:0000255" key="2"/>
<evidence type="ECO:0000255" key="3">
    <source>
        <dbReference type="PROSITE-ProRule" id="PRU00468"/>
    </source>
</evidence>
<evidence type="ECO:0000255" key="4">
    <source>
        <dbReference type="PROSITE-ProRule" id="PRU00541"/>
    </source>
</evidence>
<evidence type="ECO:0000255" key="5">
    <source>
        <dbReference type="PROSITE-ProRule" id="PRU00542"/>
    </source>
</evidence>
<evidence type="ECO:0000256" key="6">
    <source>
        <dbReference type="SAM" id="MobiDB-lite"/>
    </source>
</evidence>
<evidence type="ECO:0000269" key="7">
    <source>
    </source>
</evidence>
<evidence type="ECO:0000269" key="8">
    <source>
    </source>
</evidence>
<evidence type="ECO:0000303" key="9">
    <source>
    </source>
</evidence>
<evidence type="ECO:0000305" key="10"/>
<evidence type="ECO:0007744" key="11">
    <source>
    </source>
</evidence>
<evidence type="ECO:0007744" key="12">
    <source>
    </source>
</evidence>
<protein>
    <recommendedName>
        <fullName>SWI/SNF-related matrix-associated actin-dependent regulator of chromatin subfamily A containing DEAD/H box 1</fullName>
        <ecNumber>3.6.4.12</ecNumber>
    </recommendedName>
    <alternativeName>
        <fullName>ATP-dependent helicase SMARCAD1</fullName>
    </alternativeName>
    <alternativeName>
        <fullName>Enhancer trap locus homolog 1</fullName>
        <shortName>Etl-1</shortName>
    </alternativeName>
</protein>
<proteinExistence type="evidence at protein level"/>
<accession>Q04692</accession>
<accession>Q3UGK6</accession>
<accession>Q3UYR6</accession>
<organism>
    <name type="scientific">Mus musculus</name>
    <name type="common">Mouse</name>
    <dbReference type="NCBI Taxonomy" id="10090"/>
    <lineage>
        <taxon>Eukaryota</taxon>
        <taxon>Metazoa</taxon>
        <taxon>Chordata</taxon>
        <taxon>Craniata</taxon>
        <taxon>Vertebrata</taxon>
        <taxon>Euteleostomi</taxon>
        <taxon>Mammalia</taxon>
        <taxon>Eutheria</taxon>
        <taxon>Euarchontoglires</taxon>
        <taxon>Glires</taxon>
        <taxon>Rodentia</taxon>
        <taxon>Myomorpha</taxon>
        <taxon>Muroidea</taxon>
        <taxon>Muridae</taxon>
        <taxon>Murinae</taxon>
        <taxon>Mus</taxon>
        <taxon>Mus</taxon>
    </lineage>
</organism>
<dbReference type="EC" id="3.6.4.12"/>
<dbReference type="EMBL" id="X69942">
    <property type="protein sequence ID" value="CAA49560.1"/>
    <property type="status" value="ALT_INIT"/>
    <property type="molecule type" value="mRNA"/>
</dbReference>
<dbReference type="EMBL" id="AK122454">
    <property type="protein sequence ID" value="BAC65736.1"/>
    <property type="status" value="ALT_INIT"/>
    <property type="molecule type" value="mRNA"/>
</dbReference>
<dbReference type="EMBL" id="BC042442">
    <property type="protein sequence ID" value="AAH42442.1"/>
    <property type="molecule type" value="mRNA"/>
</dbReference>
<dbReference type="EMBL" id="AK134442">
    <property type="protein sequence ID" value="BAE22146.1"/>
    <property type="molecule type" value="mRNA"/>
</dbReference>
<dbReference type="EMBL" id="AK147884">
    <property type="protein sequence ID" value="BAE28202.1"/>
    <property type="molecule type" value="mRNA"/>
</dbReference>
<dbReference type="CCDS" id="CCDS20204.1">
    <molecule id="Q04692-1"/>
</dbReference>
<dbReference type="PIR" id="A56559">
    <property type="entry name" value="A56559"/>
</dbReference>
<dbReference type="RefSeq" id="NP_001240321.1">
    <molecule id="Q04692-2"/>
    <property type="nucleotide sequence ID" value="NM_001253392.1"/>
</dbReference>
<dbReference type="RefSeq" id="NP_001342179.1">
    <molecule id="Q04692-1"/>
    <property type="nucleotide sequence ID" value="NM_001355250.2"/>
</dbReference>
<dbReference type="RefSeq" id="NP_001396719.1">
    <molecule id="Q04692-2"/>
    <property type="nucleotide sequence ID" value="NM_001409790.1"/>
</dbReference>
<dbReference type="RefSeq" id="NP_031984.1">
    <molecule id="Q04692-1"/>
    <property type="nucleotide sequence ID" value="NM_007958.3"/>
</dbReference>
<dbReference type="RefSeq" id="XP_006505572.1">
    <property type="nucleotide sequence ID" value="XM_006505509.3"/>
</dbReference>
<dbReference type="RefSeq" id="XP_006505573.1">
    <molecule id="Q04692-1"/>
    <property type="nucleotide sequence ID" value="XM_006505510.4"/>
</dbReference>
<dbReference type="RefSeq" id="XP_006505575.1">
    <molecule id="Q04692-2"/>
    <property type="nucleotide sequence ID" value="XM_006505512.5"/>
</dbReference>
<dbReference type="RefSeq" id="XP_011239507.1">
    <property type="nucleotide sequence ID" value="XM_011241205.2"/>
</dbReference>
<dbReference type="RefSeq" id="XP_036021706.1">
    <molecule id="Q04692-2"/>
    <property type="nucleotide sequence ID" value="XM_036165813.1"/>
</dbReference>
<dbReference type="SMR" id="Q04692"/>
<dbReference type="BioGRID" id="199524">
    <property type="interactions" value="17"/>
</dbReference>
<dbReference type="FunCoup" id="Q04692">
    <property type="interactions" value="4367"/>
</dbReference>
<dbReference type="STRING" id="10090.ENSMUSP00000031984"/>
<dbReference type="ChEMBL" id="CHEMBL4879452"/>
<dbReference type="iPTMnet" id="Q04692"/>
<dbReference type="PhosphoSitePlus" id="Q04692"/>
<dbReference type="jPOST" id="Q04692"/>
<dbReference type="PaxDb" id="10090-ENSMUSP00000031984"/>
<dbReference type="PeptideAtlas" id="Q04692"/>
<dbReference type="ProteomicsDB" id="261280">
    <molecule id="Q04692-1"/>
</dbReference>
<dbReference type="ProteomicsDB" id="261281">
    <molecule id="Q04692-2"/>
</dbReference>
<dbReference type="Pumba" id="Q04692"/>
<dbReference type="Antibodypedia" id="14709">
    <property type="antibodies" value="135 antibodies from 27 providers"/>
</dbReference>
<dbReference type="DNASU" id="13990"/>
<dbReference type="Ensembl" id="ENSMUST00000031984.9">
    <molecule id="Q04692-1"/>
    <property type="protein sequence ID" value="ENSMUSP00000031984.7"/>
    <property type="gene ID" value="ENSMUSG00000029920.10"/>
</dbReference>
<dbReference type="GeneID" id="13990"/>
<dbReference type="KEGG" id="mmu:13990"/>
<dbReference type="UCSC" id="uc009ced.1">
    <molecule id="Q04692-1"/>
    <property type="organism name" value="mouse"/>
</dbReference>
<dbReference type="AGR" id="MGI:95453"/>
<dbReference type="CTD" id="56916"/>
<dbReference type="MGI" id="MGI:95453">
    <property type="gene designation" value="Smarcad1"/>
</dbReference>
<dbReference type="VEuPathDB" id="HostDB:ENSMUSG00000029920"/>
<dbReference type="eggNOG" id="KOG0389">
    <property type="taxonomic scope" value="Eukaryota"/>
</dbReference>
<dbReference type="GeneTree" id="ENSGT00910000144252"/>
<dbReference type="HOGENOM" id="CLU_000315_16_3_1"/>
<dbReference type="InParanoid" id="Q04692"/>
<dbReference type="OMA" id="TIENWIG"/>
<dbReference type="OrthoDB" id="448448at2759"/>
<dbReference type="PhylomeDB" id="Q04692"/>
<dbReference type="TreeFam" id="TF105768"/>
<dbReference type="BioGRID-ORCS" id="13990">
    <property type="hits" value="7 hits in 121 CRISPR screens"/>
</dbReference>
<dbReference type="ChiTaRS" id="Smarcad1">
    <property type="organism name" value="mouse"/>
</dbReference>
<dbReference type="PRO" id="PR:Q04692"/>
<dbReference type="Proteomes" id="UP000000589">
    <property type="component" value="Chromosome 6"/>
</dbReference>
<dbReference type="RNAct" id="Q04692">
    <property type="molecule type" value="protein"/>
</dbReference>
<dbReference type="Bgee" id="ENSMUSG00000029920">
    <property type="expression patterns" value="Expressed in undifferentiated genital tubercle and 285 other cell types or tissues"/>
</dbReference>
<dbReference type="ExpressionAtlas" id="Q04692">
    <property type="expression patterns" value="baseline and differential"/>
</dbReference>
<dbReference type="GO" id="GO:0000792">
    <property type="term" value="C:heterochromatin"/>
    <property type="evidence" value="ECO:0000314"/>
    <property type="project" value="UniProtKB"/>
</dbReference>
<dbReference type="GO" id="GO:0043596">
    <property type="term" value="C:nuclear replication fork"/>
    <property type="evidence" value="ECO:0007669"/>
    <property type="project" value="Ensembl"/>
</dbReference>
<dbReference type="GO" id="GO:0005654">
    <property type="term" value="C:nucleoplasm"/>
    <property type="evidence" value="ECO:0007669"/>
    <property type="project" value="Ensembl"/>
</dbReference>
<dbReference type="GO" id="GO:0005634">
    <property type="term" value="C:nucleus"/>
    <property type="evidence" value="ECO:0000314"/>
    <property type="project" value="UniProtKB"/>
</dbReference>
<dbReference type="GO" id="GO:0035861">
    <property type="term" value="C:site of double-strand break"/>
    <property type="evidence" value="ECO:0000250"/>
    <property type="project" value="UniProtKB"/>
</dbReference>
<dbReference type="GO" id="GO:0005524">
    <property type="term" value="F:ATP binding"/>
    <property type="evidence" value="ECO:0007669"/>
    <property type="project" value="UniProtKB-KW"/>
</dbReference>
<dbReference type="GO" id="GO:0016887">
    <property type="term" value="F:ATP hydrolysis activity"/>
    <property type="evidence" value="ECO:0007669"/>
    <property type="project" value="RHEA"/>
</dbReference>
<dbReference type="GO" id="GO:0140658">
    <property type="term" value="F:ATP-dependent chromatin remodeler activity"/>
    <property type="evidence" value="ECO:0000250"/>
    <property type="project" value="UniProtKB"/>
</dbReference>
<dbReference type="GO" id="GO:0003677">
    <property type="term" value="F:DNA binding"/>
    <property type="evidence" value="ECO:0007669"/>
    <property type="project" value="UniProtKB-KW"/>
</dbReference>
<dbReference type="GO" id="GO:0004386">
    <property type="term" value="F:helicase activity"/>
    <property type="evidence" value="ECO:0007669"/>
    <property type="project" value="UniProtKB-KW"/>
</dbReference>
<dbReference type="GO" id="GO:0043130">
    <property type="term" value="F:ubiquitin binding"/>
    <property type="evidence" value="ECO:0007669"/>
    <property type="project" value="InterPro"/>
</dbReference>
<dbReference type="GO" id="GO:0051304">
    <property type="term" value="P:chromosome separation"/>
    <property type="evidence" value="ECO:0000250"/>
    <property type="project" value="UniProtKB"/>
</dbReference>
<dbReference type="GO" id="GO:0000729">
    <property type="term" value="P:DNA double-strand break processing"/>
    <property type="evidence" value="ECO:0000250"/>
    <property type="project" value="UniProtKB"/>
</dbReference>
<dbReference type="GO" id="GO:0000018">
    <property type="term" value="P:regulation of DNA recombination"/>
    <property type="evidence" value="ECO:0000250"/>
    <property type="project" value="UniProtKB"/>
</dbReference>
<dbReference type="CDD" id="cd17998">
    <property type="entry name" value="DEXHc_SMARCAD1"/>
    <property type="match status" value="1"/>
</dbReference>
<dbReference type="CDD" id="cd18793">
    <property type="entry name" value="SF2_C_SNF"/>
    <property type="match status" value="1"/>
</dbReference>
<dbReference type="FunFam" id="3.40.50.10810:FF:000014">
    <property type="entry name" value="SWI/SNF-related matrix-associated actin-dependent regulator of chromatin subfamily A containing DEAD/H box 1"/>
    <property type="match status" value="1"/>
</dbReference>
<dbReference type="FunFam" id="3.40.50.300:FF:000639">
    <property type="entry name" value="SWI/SNF-related matrix-associated actin-dependent regulator of chromatin subfamily A containing DEAD/H box 1 isoform X1"/>
    <property type="match status" value="1"/>
</dbReference>
<dbReference type="Gene3D" id="3.40.50.300">
    <property type="entry name" value="P-loop containing nucleotide triphosphate hydrolases"/>
    <property type="match status" value="1"/>
</dbReference>
<dbReference type="Gene3D" id="3.40.50.10810">
    <property type="entry name" value="Tandem AAA-ATPase domain"/>
    <property type="match status" value="1"/>
</dbReference>
<dbReference type="InterPro" id="IPR003892">
    <property type="entry name" value="CUE"/>
</dbReference>
<dbReference type="InterPro" id="IPR014001">
    <property type="entry name" value="Helicase_ATP-bd"/>
</dbReference>
<dbReference type="InterPro" id="IPR001650">
    <property type="entry name" value="Helicase_C-like"/>
</dbReference>
<dbReference type="InterPro" id="IPR027417">
    <property type="entry name" value="P-loop_NTPase"/>
</dbReference>
<dbReference type="InterPro" id="IPR038718">
    <property type="entry name" value="SNF2-like_sf"/>
</dbReference>
<dbReference type="InterPro" id="IPR049730">
    <property type="entry name" value="SNF2/RAD54-like_C"/>
</dbReference>
<dbReference type="InterPro" id="IPR000330">
    <property type="entry name" value="SNF2_N"/>
</dbReference>
<dbReference type="PANTHER" id="PTHR10799">
    <property type="entry name" value="SNF2/RAD54 HELICASE FAMILY"/>
    <property type="match status" value="1"/>
</dbReference>
<dbReference type="Pfam" id="PF00271">
    <property type="entry name" value="Helicase_C"/>
    <property type="match status" value="1"/>
</dbReference>
<dbReference type="Pfam" id="PF00176">
    <property type="entry name" value="SNF2-rel_dom"/>
    <property type="match status" value="1"/>
</dbReference>
<dbReference type="SMART" id="SM00487">
    <property type="entry name" value="DEXDc"/>
    <property type="match status" value="1"/>
</dbReference>
<dbReference type="SMART" id="SM00490">
    <property type="entry name" value="HELICc"/>
    <property type="match status" value="1"/>
</dbReference>
<dbReference type="SUPFAM" id="SSF52540">
    <property type="entry name" value="P-loop containing nucleoside triphosphate hydrolases"/>
    <property type="match status" value="2"/>
</dbReference>
<dbReference type="PROSITE" id="PS51140">
    <property type="entry name" value="CUE"/>
    <property type="match status" value="2"/>
</dbReference>
<dbReference type="PROSITE" id="PS51192">
    <property type="entry name" value="HELICASE_ATP_BIND_1"/>
    <property type="match status" value="1"/>
</dbReference>
<dbReference type="PROSITE" id="PS51194">
    <property type="entry name" value="HELICASE_CTER"/>
    <property type="match status" value="1"/>
</dbReference>
<feature type="chain" id="PRO_0000074357" description="SWI/SNF-related matrix-associated actin-dependent regulator of chromatin subfamily A containing DEAD/H box 1">
    <location>
        <begin position="1"/>
        <end position="1021"/>
    </location>
</feature>
<feature type="domain" description="CUE 1" evidence="3">
    <location>
        <begin position="156"/>
        <end position="198"/>
    </location>
</feature>
<feature type="domain" description="CUE 2" evidence="3">
    <location>
        <begin position="247"/>
        <end position="290"/>
    </location>
</feature>
<feature type="domain" description="Helicase ATP-binding" evidence="4">
    <location>
        <begin position="504"/>
        <end position="672"/>
    </location>
</feature>
<feature type="domain" description="Helicase C-terminal" evidence="5">
    <location>
        <begin position="853"/>
        <end position="1005"/>
    </location>
</feature>
<feature type="region of interest" description="Disordered" evidence="6">
    <location>
        <begin position="1"/>
        <end position="82"/>
    </location>
</feature>
<feature type="region of interest" description="Disordered" evidence="6">
    <location>
        <begin position="124"/>
        <end position="151"/>
    </location>
</feature>
<feature type="region of interest" description="Disordered" evidence="6">
    <location>
        <begin position="201"/>
        <end position="246"/>
    </location>
</feature>
<feature type="region of interest" description="Disordered" evidence="6">
    <location>
        <begin position="329"/>
        <end position="366"/>
    </location>
</feature>
<feature type="short sequence motif" description="DEGH box">
    <location>
        <begin position="623"/>
        <end position="626"/>
    </location>
</feature>
<feature type="short sequence motif" description="Nuclear localization signal" evidence="2">
    <location>
        <begin position="716"/>
        <end position="733"/>
    </location>
</feature>
<feature type="short sequence motif" description="DEAD box">
    <location>
        <begin position="1000"/>
        <end position="1003"/>
    </location>
</feature>
<feature type="compositionally biased region" description="Basic and acidic residues" evidence="6">
    <location>
        <begin position="7"/>
        <end position="19"/>
    </location>
</feature>
<feature type="compositionally biased region" description="Low complexity" evidence="6">
    <location>
        <begin position="22"/>
        <end position="39"/>
    </location>
</feature>
<feature type="binding site" evidence="4">
    <location>
        <begin position="516"/>
        <end position="524"/>
    </location>
    <ligand>
        <name>ATP</name>
        <dbReference type="ChEBI" id="CHEBI:30616"/>
    </ligand>
</feature>
<feature type="binding site" evidence="4">
    <location>
        <begin position="892"/>
        <end position="899"/>
    </location>
    <ligand>
        <name>ATP</name>
        <dbReference type="ChEBI" id="CHEBI:30616"/>
    </ligand>
</feature>
<feature type="modified residue" description="N-acetylmethionine" evidence="1">
    <location>
        <position position="1"/>
    </location>
</feature>
<feature type="modified residue" description="Phosphothreonine" evidence="1">
    <location>
        <position position="54"/>
    </location>
</feature>
<feature type="modified residue" description="Phosphoserine" evidence="1">
    <location>
        <position position="57"/>
    </location>
</feature>
<feature type="modified residue" description="Phosphoserine" evidence="1">
    <location>
        <position position="79"/>
    </location>
</feature>
<feature type="modified residue" description="Phosphoserine" evidence="12">
    <location>
        <position position="124"/>
    </location>
</feature>
<feature type="modified residue" description="Phosphoserine" evidence="12">
    <location>
        <position position="127"/>
    </location>
</feature>
<feature type="modified residue" description="Phosphoserine" evidence="1">
    <location>
        <position position="132"/>
    </location>
</feature>
<feature type="modified residue" description="Phosphoserine" evidence="11 12">
    <location>
        <position position="144"/>
    </location>
</feature>
<feature type="modified residue" description="Phosphoserine" evidence="11 12">
    <location>
        <position position="145"/>
    </location>
</feature>
<feature type="modified residue" description="Phosphoserine" evidence="12">
    <location>
        <position position="151"/>
    </location>
</feature>
<feature type="modified residue" description="Phosphoserine" evidence="1">
    <location>
        <position position="210"/>
    </location>
</feature>
<feature type="modified residue" description="Phosphoserine" evidence="1">
    <location>
        <position position="213"/>
    </location>
</feature>
<feature type="modified residue" description="Phosphoserine" evidence="1">
    <location>
        <position position="235"/>
    </location>
</feature>
<feature type="modified residue" description="Phosphoserine" evidence="1">
    <location>
        <position position="238"/>
    </location>
</feature>
<feature type="modified residue" description="Phosphoserine" evidence="1">
    <location>
        <position position="298"/>
    </location>
</feature>
<feature type="cross-link" description="Glycyl lysine isopeptide (Lys-Gly) (interchain with G-Cter in SUMO2)" evidence="1">
    <location>
        <position position="77"/>
    </location>
</feature>
<feature type="cross-link" description="Glycyl lysine isopeptide (Lys-Gly) (interchain with G-Cter in SUMO2)" evidence="1">
    <location>
        <position position="330"/>
    </location>
</feature>
<feature type="cross-link" description="Glycyl lysine isopeptide (Lys-Gly) (interchain with G-Cter in SUMO2)" evidence="1">
    <location>
        <position position="466"/>
    </location>
</feature>
<feature type="cross-link" description="Glycyl lysine isopeptide (Lys-Gly) (interchain with G-Cter in SUMO2)" evidence="1">
    <location>
        <position position="719"/>
    </location>
</feature>
<feature type="cross-link" description="Glycyl lysine isopeptide (Lys-Gly) (interchain with G-Cter in SUMO2)" evidence="1">
    <location>
        <position position="991"/>
    </location>
</feature>
<feature type="splice variant" id="VSP_007080" description="In isoform 2." evidence="9">
    <location>
        <begin position="1"/>
        <end position="185"/>
    </location>
</feature>
<feature type="sequence conflict" description="In Ref. 1; CAA49560." evidence="10" ref="1">
    <original>I</original>
    <variation>S</variation>
    <location>
        <position position="857"/>
    </location>
</feature>
<gene>
    <name type="primary">Smarcad1</name>
    <name type="synonym">Etl1</name>
    <name type="synonym">Kiaa1122</name>
</gene>
<comment type="function">
    <text evidence="1">DNA helicase that possesses intrinsic ATP-dependent nucleosome-remodeling activity and is both required for DNA repair and heterochromatin organization. Promotes DNA end resection of double-strand breaks (DSBs) following DNA damage: probably acts by weakening histone DNA interactions in nucleosomes flanking DSBs. Required for the restoration of heterochromatin organization after replication. Acts at replication sites to facilitate the maintenance of heterochromatin by directing H3 and H4 histones deacetylation, H3 'Lys-9' trimethylation (H3K9me3) and restoration of silencing.</text>
</comment>
<comment type="catalytic activity">
    <reaction evidence="1">
        <text>ATP + H2O = ADP + phosphate + H(+)</text>
        <dbReference type="Rhea" id="RHEA:13065"/>
        <dbReference type="ChEBI" id="CHEBI:15377"/>
        <dbReference type="ChEBI" id="CHEBI:15378"/>
        <dbReference type="ChEBI" id="CHEBI:30616"/>
        <dbReference type="ChEBI" id="CHEBI:43474"/>
        <dbReference type="ChEBI" id="CHEBI:456216"/>
        <dbReference type="EC" id="3.6.4.12"/>
    </reaction>
    <physiologicalReaction direction="left-to-right" evidence="1">
        <dbReference type="Rhea" id="RHEA:13066"/>
    </physiologicalReaction>
</comment>
<comment type="subunit">
    <text evidence="1">Binds to DNA preferentially in the vicinity of transcriptional start sites. Interacts with MSH2 and TRIM28. Part of a complex composed of TRIM28, HDAC1, HDAC2 and EHMT2. Interacts with PCNA.</text>
</comment>
<comment type="subcellular location">
    <subcellularLocation>
        <location evidence="1">Nucleus</location>
    </subcellularLocation>
    <subcellularLocation>
        <location evidence="1">Chromosome</location>
    </subcellularLocation>
    <text evidence="1">Colocalizes with PCNA at replication forks during S phase. Recruited to double-strand breaks (DSBs) sites of DNA damage.</text>
</comment>
<comment type="alternative products">
    <event type="alternative splicing"/>
    <isoform>
        <id>Q04692-1</id>
        <name>1</name>
        <sequence type="displayed"/>
    </isoform>
    <isoform>
        <id>Q04692-2</id>
        <name>2</name>
        <sequence type="described" ref="VSP_007080"/>
    </isoform>
</comment>
<comment type="developmental stage">
    <text evidence="8">Detected at low levels in fertilized and unfertilized eggs. Levels increased in two-cell embryos, decreased up to morula stage and were highest in blastocysts. Highly expressed in the inner cell mass of 3.5 day old blastocysts. Highly expressed in ectoderm and visceral endoderm at day 5.5. Detected throughout the brain and spinal cord at day 10 to 15. Detected in the basal layer of the epidermis after day 12.5, in particular on snout and distal on fore- and hindlimbs.</text>
</comment>
<comment type="disruption phenotype">
    <text evidence="7">Deficient mice have reduced viability and show growth retardation, skeletal dysplasia and impaired fertility.</text>
</comment>
<comment type="similarity">
    <text evidence="10">Belongs to the SNF2/RAD54 helicase family.</text>
</comment>
<comment type="sequence caution" evidence="10">
    <conflict type="erroneous initiation">
        <sequence resource="EMBL-CDS" id="BAC65736"/>
    </conflict>
    <text>Extended N-terminus.</text>
</comment>
<comment type="sequence caution" evidence="10">
    <conflict type="erroneous initiation">
        <sequence resource="EMBL-CDS" id="CAA49560"/>
    </conflict>
    <text>Extended N-terminus.</text>
</comment>
<reference key="1">
    <citation type="journal article" date="1992" name="Mech. Dev.">
        <title>The mouse Enhancer trap locus 1 (Etl-1): a novel mammalian gene related to Drosophila and yeast transcriptional regulator genes.</title>
        <authorList>
            <person name="Soininen R."/>
            <person name="Schoor M."/>
            <person name="Henseling U."/>
            <person name="Tepe C."/>
            <person name="Kisters-Woike B."/>
            <person name="Rossant J."/>
            <person name="Gossler A."/>
        </authorList>
    </citation>
    <scope>NUCLEOTIDE SEQUENCE [MRNA] (ISOFORM 1)</scope>
    <source>
        <strain>C57BL/6J</strain>
        <tissue>Embryo</tissue>
    </source>
</reference>
<reference key="2">
    <citation type="journal article" date="2003" name="DNA Res.">
        <title>Prediction of the coding sequences of mouse homologues of KIAA gene: II. The complete nucleotide sequences of 400 mouse KIAA-homologous cDNAs identified by screening of terminal sequences of cDNA clones randomly sampled from size-fractionated libraries.</title>
        <authorList>
            <person name="Okazaki N."/>
            <person name="Kikuno R."/>
            <person name="Ohara R."/>
            <person name="Inamoto S."/>
            <person name="Aizawa H."/>
            <person name="Yuasa S."/>
            <person name="Nakajima D."/>
            <person name="Nagase T."/>
            <person name="Ohara O."/>
            <person name="Koga H."/>
        </authorList>
    </citation>
    <scope>NUCLEOTIDE SEQUENCE [LARGE SCALE MRNA] (ISOFORM 1)</scope>
    <source>
        <tissue>Brain</tissue>
    </source>
</reference>
<reference key="3">
    <citation type="journal article" date="2004" name="Genome Res.">
        <title>The status, quality, and expansion of the NIH full-length cDNA project: the Mammalian Gene Collection (MGC).</title>
        <authorList>
            <consortium name="The MGC Project Team"/>
        </authorList>
    </citation>
    <scope>NUCLEOTIDE SEQUENCE [LARGE SCALE MRNA] (ISOFORM 2)</scope>
    <source>
        <strain>FVB/N</strain>
    </source>
</reference>
<reference key="4">
    <citation type="journal article" date="2005" name="Science">
        <title>The transcriptional landscape of the mammalian genome.</title>
        <authorList>
            <person name="Carninci P."/>
            <person name="Kasukawa T."/>
            <person name="Katayama S."/>
            <person name="Gough J."/>
            <person name="Frith M.C."/>
            <person name="Maeda N."/>
            <person name="Oyama R."/>
            <person name="Ravasi T."/>
            <person name="Lenhard B."/>
            <person name="Wells C."/>
            <person name="Kodzius R."/>
            <person name="Shimokawa K."/>
            <person name="Bajic V.B."/>
            <person name="Brenner S.E."/>
            <person name="Batalov S."/>
            <person name="Forrest A.R."/>
            <person name="Zavolan M."/>
            <person name="Davis M.J."/>
            <person name="Wilming L.G."/>
            <person name="Aidinis V."/>
            <person name="Allen J.E."/>
            <person name="Ambesi-Impiombato A."/>
            <person name="Apweiler R."/>
            <person name="Aturaliya R.N."/>
            <person name="Bailey T.L."/>
            <person name="Bansal M."/>
            <person name="Baxter L."/>
            <person name="Beisel K.W."/>
            <person name="Bersano T."/>
            <person name="Bono H."/>
            <person name="Chalk A.M."/>
            <person name="Chiu K.P."/>
            <person name="Choudhary V."/>
            <person name="Christoffels A."/>
            <person name="Clutterbuck D.R."/>
            <person name="Crowe M.L."/>
            <person name="Dalla E."/>
            <person name="Dalrymple B.P."/>
            <person name="de Bono B."/>
            <person name="Della Gatta G."/>
            <person name="di Bernardo D."/>
            <person name="Down T."/>
            <person name="Engstrom P."/>
            <person name="Fagiolini M."/>
            <person name="Faulkner G."/>
            <person name="Fletcher C.F."/>
            <person name="Fukushima T."/>
            <person name="Furuno M."/>
            <person name="Futaki S."/>
            <person name="Gariboldi M."/>
            <person name="Georgii-Hemming P."/>
            <person name="Gingeras T.R."/>
            <person name="Gojobori T."/>
            <person name="Green R.E."/>
            <person name="Gustincich S."/>
            <person name="Harbers M."/>
            <person name="Hayashi Y."/>
            <person name="Hensch T.K."/>
            <person name="Hirokawa N."/>
            <person name="Hill D."/>
            <person name="Huminiecki L."/>
            <person name="Iacono M."/>
            <person name="Ikeo K."/>
            <person name="Iwama A."/>
            <person name="Ishikawa T."/>
            <person name="Jakt M."/>
            <person name="Kanapin A."/>
            <person name="Katoh M."/>
            <person name="Kawasawa Y."/>
            <person name="Kelso J."/>
            <person name="Kitamura H."/>
            <person name="Kitano H."/>
            <person name="Kollias G."/>
            <person name="Krishnan S.P."/>
            <person name="Kruger A."/>
            <person name="Kummerfeld S.K."/>
            <person name="Kurochkin I.V."/>
            <person name="Lareau L.F."/>
            <person name="Lazarevic D."/>
            <person name="Lipovich L."/>
            <person name="Liu J."/>
            <person name="Liuni S."/>
            <person name="McWilliam S."/>
            <person name="Madan Babu M."/>
            <person name="Madera M."/>
            <person name="Marchionni L."/>
            <person name="Matsuda H."/>
            <person name="Matsuzawa S."/>
            <person name="Miki H."/>
            <person name="Mignone F."/>
            <person name="Miyake S."/>
            <person name="Morris K."/>
            <person name="Mottagui-Tabar S."/>
            <person name="Mulder N."/>
            <person name="Nakano N."/>
            <person name="Nakauchi H."/>
            <person name="Ng P."/>
            <person name="Nilsson R."/>
            <person name="Nishiguchi S."/>
            <person name="Nishikawa S."/>
            <person name="Nori F."/>
            <person name="Ohara O."/>
            <person name="Okazaki Y."/>
            <person name="Orlando V."/>
            <person name="Pang K.C."/>
            <person name="Pavan W.J."/>
            <person name="Pavesi G."/>
            <person name="Pesole G."/>
            <person name="Petrovsky N."/>
            <person name="Piazza S."/>
            <person name="Reed J."/>
            <person name="Reid J.F."/>
            <person name="Ring B.Z."/>
            <person name="Ringwald M."/>
            <person name="Rost B."/>
            <person name="Ruan Y."/>
            <person name="Salzberg S.L."/>
            <person name="Sandelin A."/>
            <person name="Schneider C."/>
            <person name="Schoenbach C."/>
            <person name="Sekiguchi K."/>
            <person name="Semple C.A."/>
            <person name="Seno S."/>
            <person name="Sessa L."/>
            <person name="Sheng Y."/>
            <person name="Shibata Y."/>
            <person name="Shimada H."/>
            <person name="Shimada K."/>
            <person name="Silva D."/>
            <person name="Sinclair B."/>
            <person name="Sperling S."/>
            <person name="Stupka E."/>
            <person name="Sugiura K."/>
            <person name="Sultana R."/>
            <person name="Takenaka Y."/>
            <person name="Taki K."/>
            <person name="Tammoja K."/>
            <person name="Tan S.L."/>
            <person name="Tang S."/>
            <person name="Taylor M.S."/>
            <person name="Tegner J."/>
            <person name="Teichmann S.A."/>
            <person name="Ueda H.R."/>
            <person name="van Nimwegen E."/>
            <person name="Verardo R."/>
            <person name="Wei C.L."/>
            <person name="Yagi K."/>
            <person name="Yamanishi H."/>
            <person name="Zabarovsky E."/>
            <person name="Zhu S."/>
            <person name="Zimmer A."/>
            <person name="Hide W."/>
            <person name="Bult C."/>
            <person name="Grimmond S.M."/>
            <person name="Teasdale R.D."/>
            <person name="Liu E.T."/>
            <person name="Brusic V."/>
            <person name="Quackenbush J."/>
            <person name="Wahlestedt C."/>
            <person name="Mattick J.S."/>
            <person name="Hume D.A."/>
            <person name="Kai C."/>
            <person name="Sasaki D."/>
            <person name="Tomaru Y."/>
            <person name="Fukuda S."/>
            <person name="Kanamori-Katayama M."/>
            <person name="Suzuki M."/>
            <person name="Aoki J."/>
            <person name="Arakawa T."/>
            <person name="Iida J."/>
            <person name="Imamura K."/>
            <person name="Itoh M."/>
            <person name="Kato T."/>
            <person name="Kawaji H."/>
            <person name="Kawagashira N."/>
            <person name="Kawashima T."/>
            <person name="Kojima M."/>
            <person name="Kondo S."/>
            <person name="Konno H."/>
            <person name="Nakano K."/>
            <person name="Ninomiya N."/>
            <person name="Nishio T."/>
            <person name="Okada M."/>
            <person name="Plessy C."/>
            <person name="Shibata K."/>
            <person name="Shiraki T."/>
            <person name="Suzuki S."/>
            <person name="Tagami M."/>
            <person name="Waki K."/>
            <person name="Watahiki A."/>
            <person name="Okamura-Oho Y."/>
            <person name="Suzuki H."/>
            <person name="Kawai J."/>
            <person name="Hayashizaki Y."/>
        </authorList>
    </citation>
    <scope>NUCLEOTIDE SEQUENCE [LARGE SCALE MRNA] OF 1-760</scope>
    <source>
        <strain>C57BL/6J</strain>
        <tissue>Testis</tissue>
    </source>
</reference>
<reference key="5">
    <citation type="journal article" date="1993" name="Dev. Dyn.">
        <title>The Etl-1 gene encodes a nuclear protein differentially expressed during early mouse development.</title>
        <authorList>
            <person name="Schoor M."/>
            <person name="Schuster-Gossler K."/>
            <person name="Gossler A."/>
        </authorList>
    </citation>
    <scope>SUBCELLULAR LOCATION</scope>
    <scope>DEVELOPMENTAL STAGE</scope>
</reference>
<reference key="6">
    <citation type="journal article" date="1999" name="Mech. Dev.">
        <title>Skeletal dysplasias, growth retardation, reduced postnatal survival, and impaired fertility in mice lacking the SNF2/SWI2 family member ETL1.</title>
        <authorList>
            <person name="Schoor M."/>
            <person name="Schuster-Gossler K."/>
            <person name="Roopenian D."/>
            <person name="Gossler A."/>
        </authorList>
    </citation>
    <scope>DISRUPTION PHENOTYPE</scope>
</reference>
<reference key="7">
    <citation type="journal article" date="2007" name="J. Proteome Res.">
        <title>A differential phosphoproteomic analysis of retinoic acid-treated P19 cells.</title>
        <authorList>
            <person name="Smith J.C."/>
            <person name="Duchesne M.A."/>
            <person name="Tozzi P."/>
            <person name="Ethier M."/>
            <person name="Figeys D."/>
        </authorList>
    </citation>
    <scope>IDENTIFICATION BY MASS SPECTROMETRY [LARGE SCALE ANALYSIS]</scope>
    <source>
        <tissue>Teratocarcinoma</tissue>
    </source>
</reference>
<reference key="8">
    <citation type="journal article" date="2007" name="Proc. Natl. Acad. Sci. U.S.A.">
        <title>Large-scale phosphorylation analysis of mouse liver.</title>
        <authorList>
            <person name="Villen J."/>
            <person name="Beausoleil S.A."/>
            <person name="Gerber S.A."/>
            <person name="Gygi S.P."/>
        </authorList>
    </citation>
    <scope>PHOSPHORYLATION [LARGE SCALE ANALYSIS] AT SER-144 AND SER-145</scope>
    <scope>IDENTIFICATION BY MASS SPECTROMETRY [LARGE SCALE ANALYSIS]</scope>
    <source>
        <tissue>Liver</tissue>
    </source>
</reference>
<reference key="9">
    <citation type="journal article" date="2008" name="J. Mol. Biol.">
        <title>The novel protein complex with SMARCAD1/KIAA1122 binds to the vicinity of TSS.</title>
        <authorList>
            <person name="Okazaki N."/>
            <person name="Ikeda S."/>
            <person name="Ohara R."/>
            <person name="Shimada K."/>
            <person name="Yanagawa T."/>
            <person name="Nagase T."/>
            <person name="Ohara O."/>
            <person name="Koga H."/>
        </authorList>
    </citation>
    <scope>SUBCELLULAR LOCATION</scope>
</reference>
<reference key="10">
    <citation type="journal article" date="2010" name="Cell">
        <title>A tissue-specific atlas of mouse protein phosphorylation and expression.</title>
        <authorList>
            <person name="Huttlin E.L."/>
            <person name="Jedrychowski M.P."/>
            <person name="Elias J.E."/>
            <person name="Goswami T."/>
            <person name="Rad R."/>
            <person name="Beausoleil S.A."/>
            <person name="Villen J."/>
            <person name="Haas W."/>
            <person name="Sowa M.E."/>
            <person name="Gygi S.P."/>
        </authorList>
    </citation>
    <scope>PHOSPHORYLATION [LARGE SCALE ANALYSIS] AT SER-124; SER-127; SER-144; SER-145 AND SER-151</scope>
    <scope>IDENTIFICATION BY MASS SPECTROMETRY [LARGE SCALE ANALYSIS]</scope>
    <source>
        <tissue>Brain</tissue>
        <tissue>Brown adipose tissue</tissue>
        <tissue>Kidney</tissue>
        <tissue>Liver</tissue>
        <tissue>Lung</tissue>
        <tissue>Pancreas</tissue>
        <tissue>Spleen</tissue>
        <tissue>Testis</tissue>
    </source>
</reference>
<reference key="11">
    <citation type="journal article" date="2011" name="Mol. Cell">
        <title>Maintenance of silent chromatin through replication requires SWI/SNF-like chromatin remodeler SMARCAD1.</title>
        <authorList>
            <person name="Rowbotham S.P."/>
            <person name="Barki L."/>
            <person name="Neves-Costa A."/>
            <person name="Santos F."/>
            <person name="Dean W."/>
            <person name="Hawkes N."/>
            <person name="Choudhary P."/>
            <person name="Will W.R."/>
            <person name="Webster J."/>
            <person name="Oxley D."/>
            <person name="Green C.M."/>
            <person name="Varga-Weisz P."/>
            <person name="Mermoud J.E."/>
        </authorList>
    </citation>
    <scope>SUBCELLULAR LOCATION</scope>
</reference>